<protein>
    <recommendedName>
        <fullName>Cuticle protein 19.8</fullName>
    </recommendedName>
    <alternativeName>
        <fullName>LmNCP19.8</fullName>
    </alternativeName>
</protein>
<proteinExistence type="evidence at protein level"/>
<dbReference type="GO" id="GO:0031012">
    <property type="term" value="C:extracellular matrix"/>
    <property type="evidence" value="ECO:0007669"/>
    <property type="project" value="TreeGrafter"/>
</dbReference>
<dbReference type="GO" id="GO:0005615">
    <property type="term" value="C:extracellular space"/>
    <property type="evidence" value="ECO:0007669"/>
    <property type="project" value="TreeGrafter"/>
</dbReference>
<dbReference type="GO" id="GO:0042302">
    <property type="term" value="F:structural constituent of cuticle"/>
    <property type="evidence" value="ECO:0007669"/>
    <property type="project" value="UniProtKB-KW"/>
</dbReference>
<dbReference type="InterPro" id="IPR031311">
    <property type="entry name" value="CHIT_BIND_RR_consensus"/>
</dbReference>
<dbReference type="InterPro" id="IPR000618">
    <property type="entry name" value="Insect_cuticle"/>
</dbReference>
<dbReference type="InterPro" id="IPR051217">
    <property type="entry name" value="Insect_Cuticle_Struc_Prot"/>
</dbReference>
<dbReference type="PANTHER" id="PTHR12236:SF95">
    <property type="entry name" value="CUTICULAR PROTEIN 76BD, ISOFORM C-RELATED"/>
    <property type="match status" value="1"/>
</dbReference>
<dbReference type="PANTHER" id="PTHR12236">
    <property type="entry name" value="STRUCTURAL CONTITUENT OF CUTICLE"/>
    <property type="match status" value="1"/>
</dbReference>
<dbReference type="Pfam" id="PF00379">
    <property type="entry name" value="Chitin_bind_4"/>
    <property type="match status" value="1"/>
</dbReference>
<dbReference type="PRINTS" id="PR00947">
    <property type="entry name" value="CUTICLE"/>
</dbReference>
<dbReference type="PROSITE" id="PS00233">
    <property type="entry name" value="CHIT_BIND_RR_1"/>
    <property type="match status" value="1"/>
</dbReference>
<dbReference type="PROSITE" id="PS51155">
    <property type="entry name" value="CHIT_BIND_RR_2"/>
    <property type="match status" value="1"/>
</dbReference>
<accession>P82166</accession>
<keyword id="KW-0193">Cuticle</keyword>
<keyword id="KW-0903">Direct protein sequencing</keyword>
<keyword id="KW-0677">Repeat</keyword>
<reference evidence="5" key="1">
    <citation type="journal article" date="2000" name="Insect Biochem. Mol. Biol.">
        <title>Studies on proteins in post-ecdysial nymphal cuticle of locust, Locusta migratoria, and cockroach, Blaberus craniifer.</title>
        <authorList>
            <person name="Andersen S.O."/>
        </authorList>
    </citation>
    <scope>PROTEIN SEQUENCE</scope>
    <scope>MASS SPECTROMETRY</scope>
    <source>
        <tissue evidence="4">Fifth instar larvae cuticle</tissue>
    </source>
</reference>
<sequence>IYVPAPAPAVYAPYAARAYAAPAVVAAPAAPAVRAAAVPVAAAAPAAVAAAEYDPHPQYSYGYSVNDALTGDSKSQQESRDGDVVQGSYSLVEPDGSVRTVDYTADPVNGFNAVVHKEPGVHAPIAAPVPAPAVPAGHVRTTVAAPAVAAAPVVRAAIAAPAYATYAAAPIARTAVAAPAIAAAPIARAAYAYPYAGAYF</sequence>
<feature type="chain" id="PRO_0000252036" description="Cuticle protein 19.8">
    <location>
        <begin position="1"/>
        <end position="200"/>
    </location>
</feature>
<feature type="repeat" description="1" evidence="1">
    <location>
        <begin position="20"/>
        <end position="23"/>
    </location>
</feature>
<feature type="repeat" description="2" evidence="1">
    <location>
        <begin position="26"/>
        <end position="29"/>
    </location>
</feature>
<feature type="repeat" description="3" evidence="1">
    <location>
        <begin position="43"/>
        <end position="46"/>
    </location>
</feature>
<feature type="domain" description="Chitin-binding type R&amp;R" evidence="2">
    <location>
        <begin position="56"/>
        <end position="127"/>
    </location>
</feature>
<feature type="repeat" description="4" evidence="1">
    <location>
        <begin position="126"/>
        <end position="129"/>
    </location>
</feature>
<feature type="repeat" description="5" evidence="1">
    <location>
        <begin position="144"/>
        <end position="147"/>
    </location>
</feature>
<feature type="repeat" description="6" evidence="1">
    <location>
        <begin position="150"/>
        <end position="153"/>
    </location>
</feature>
<feature type="repeat" description="7" evidence="1">
    <location>
        <begin position="159"/>
        <end position="162"/>
    </location>
</feature>
<feature type="repeat" description="8" evidence="1">
    <location>
        <begin position="177"/>
        <end position="180"/>
    </location>
</feature>
<feature type="region of interest" description="Disordered" evidence="3">
    <location>
        <begin position="70"/>
        <end position="89"/>
    </location>
</feature>
<evidence type="ECO:0000255" key="1"/>
<evidence type="ECO:0000255" key="2">
    <source>
        <dbReference type="PROSITE-ProRule" id="PRU00497"/>
    </source>
</evidence>
<evidence type="ECO:0000256" key="3">
    <source>
        <dbReference type="SAM" id="MobiDB-lite"/>
    </source>
</evidence>
<evidence type="ECO:0000269" key="4">
    <source>
    </source>
</evidence>
<evidence type="ECO:0000305" key="5"/>
<name>CU198_LOCMI</name>
<organism>
    <name type="scientific">Locusta migratoria</name>
    <name type="common">Migratory locust</name>
    <dbReference type="NCBI Taxonomy" id="7004"/>
    <lineage>
        <taxon>Eukaryota</taxon>
        <taxon>Metazoa</taxon>
        <taxon>Ecdysozoa</taxon>
        <taxon>Arthropoda</taxon>
        <taxon>Hexapoda</taxon>
        <taxon>Insecta</taxon>
        <taxon>Pterygota</taxon>
        <taxon>Neoptera</taxon>
        <taxon>Polyneoptera</taxon>
        <taxon>Orthoptera</taxon>
        <taxon>Caelifera</taxon>
        <taxon>Acrididea</taxon>
        <taxon>Acridomorpha</taxon>
        <taxon>Acridoidea</taxon>
        <taxon>Acrididae</taxon>
        <taxon>Oedipodinae</taxon>
        <taxon>Locusta</taxon>
    </lineage>
</organism>
<comment type="function">
    <text evidence="5">Component of the cuticle of migratory locust which contains more than 100 different structural proteins.</text>
</comment>
<comment type="domain">
    <text evidence="5">The tetrapeptide (A-A-P-[AV]) repeats found throughout the protein are also present in many proteins constituting the protective envelope of other species.</text>
</comment>
<comment type="mass spectrometry"/>